<sequence>MGSKSYPTVSDEYLAAVGKAKRKLRGLIAEKNCAPLMLRLAWHSAGTFDVSSRTGGPFGTMKNPGEQSHAANAGLDIAVRLLDPIKDQLPILSYADFYQLAGVVAVEVTGGPEVPFHPGRQDKPEPPPEGRLPDATQGSDHLRQVFSAQMGLSDKDIVALSGGHTLGRCHKERSGFEGAWTSNPLIFDNSYFTELVSGEKEGLLQLPSDKALMADPAFRPLVEKYAADEDAFFADYAEAHLKLSELGFAEE</sequence>
<organism>
    <name type="scientific">Oryza sativa subsp. japonica</name>
    <name type="common">Rice</name>
    <dbReference type="NCBI Taxonomy" id="39947"/>
    <lineage>
        <taxon>Eukaryota</taxon>
        <taxon>Viridiplantae</taxon>
        <taxon>Streptophyta</taxon>
        <taxon>Embryophyta</taxon>
        <taxon>Tracheophyta</taxon>
        <taxon>Spermatophyta</taxon>
        <taxon>Magnoliopsida</taxon>
        <taxon>Liliopsida</taxon>
        <taxon>Poales</taxon>
        <taxon>Poaceae</taxon>
        <taxon>BOP clade</taxon>
        <taxon>Oryzoideae</taxon>
        <taxon>Oryzeae</taxon>
        <taxon>Oryzinae</taxon>
        <taxon>Oryza</taxon>
        <taxon>Oryza sativa</taxon>
    </lineage>
</organism>
<gene>
    <name evidence="11" type="primary">APX2</name>
    <name type="synonym">SS622</name>
    <name evidence="15" type="ordered locus">Os07g0694700</name>
    <name evidence="13" type="ordered locus">LOC_Os07g49400</name>
    <name evidence="16" type="ORF">OsJ_25704</name>
    <name evidence="14" type="ORF">P0627E10.14</name>
</gene>
<keyword id="KW-0106">Calcium</keyword>
<keyword id="KW-0963">Cytoplasm</keyword>
<keyword id="KW-0903">Direct protein sequencing</keyword>
<keyword id="KW-0349">Heme</keyword>
<keyword id="KW-0376">Hydrogen peroxide</keyword>
<keyword id="KW-0408">Iron</keyword>
<keyword id="KW-0479">Metal-binding</keyword>
<keyword id="KW-0560">Oxidoreductase</keyword>
<keyword id="KW-0575">Peroxidase</keyword>
<keyword id="KW-0630">Potassium</keyword>
<keyword id="KW-1185">Reference proteome</keyword>
<keyword id="KW-0346">Stress response</keyword>
<accession>Q9FE01</accession>
<accession>Q0D3B8</accession>
<accession>Q40735</accession>
<feature type="chain" id="PRO_0000055594" description="L-ascorbate peroxidase 2, cytosolic">
    <location>
        <begin position="1"/>
        <end position="251"/>
    </location>
</feature>
<feature type="region of interest" description="Disordered" evidence="4">
    <location>
        <begin position="113"/>
        <end position="137"/>
    </location>
</feature>
<feature type="compositionally biased region" description="Basic and acidic residues" evidence="4">
    <location>
        <begin position="119"/>
        <end position="132"/>
    </location>
</feature>
<feature type="active site" description="Proton acceptor" evidence="2 3">
    <location>
        <position position="43"/>
    </location>
</feature>
<feature type="binding site" description="axial binding residue" evidence="2">
    <location>
        <position position="164"/>
    </location>
    <ligand>
        <name>heme b</name>
        <dbReference type="ChEBI" id="CHEBI:60344"/>
    </ligand>
    <ligandPart>
        <name>Fe</name>
        <dbReference type="ChEBI" id="CHEBI:18248"/>
    </ligandPart>
</feature>
<feature type="binding site" evidence="1">
    <location>
        <position position="165"/>
    </location>
    <ligand>
        <name>K(+)</name>
        <dbReference type="ChEBI" id="CHEBI:29103"/>
    </ligand>
</feature>
<feature type="binding site" evidence="1">
    <location>
        <position position="181"/>
    </location>
    <ligand>
        <name>K(+)</name>
        <dbReference type="ChEBI" id="CHEBI:29103"/>
    </ligand>
</feature>
<feature type="binding site" evidence="1">
    <location>
        <position position="183"/>
    </location>
    <ligand>
        <name>K(+)</name>
        <dbReference type="ChEBI" id="CHEBI:29103"/>
    </ligand>
</feature>
<feature type="binding site" evidence="1">
    <location>
        <position position="186"/>
    </location>
    <ligand>
        <name>K(+)</name>
        <dbReference type="ChEBI" id="CHEBI:29103"/>
    </ligand>
</feature>
<feature type="binding site" evidence="1">
    <location>
        <position position="188"/>
    </location>
    <ligand>
        <name>K(+)</name>
        <dbReference type="ChEBI" id="CHEBI:29103"/>
    </ligand>
</feature>
<feature type="site" description="Transition state stabilizer" evidence="2">
    <location>
        <position position="39"/>
    </location>
</feature>
<feature type="sequence conflict" description="In Ref. 7; BAA04962." evidence="13" ref="7">
    <original>GLLQLPSDKALMAD</original>
    <variation>PSSSCQVTKPSWLT</variation>
    <location>
        <begin position="202"/>
        <end position="215"/>
    </location>
</feature>
<name>APX2_ORYSJ</name>
<evidence type="ECO:0000250" key="1"/>
<evidence type="ECO:0000255" key="2">
    <source>
        <dbReference type="PROSITE-ProRule" id="PRU00297"/>
    </source>
</evidence>
<evidence type="ECO:0000255" key="3">
    <source>
        <dbReference type="PROSITE-ProRule" id="PRU10012"/>
    </source>
</evidence>
<evidence type="ECO:0000256" key="4">
    <source>
        <dbReference type="SAM" id="MobiDB-lite"/>
    </source>
</evidence>
<evidence type="ECO:0000269" key="5">
    <source>
    </source>
</evidence>
<evidence type="ECO:0000269" key="6">
    <source>
    </source>
</evidence>
<evidence type="ECO:0000269" key="7">
    <source>
    </source>
</evidence>
<evidence type="ECO:0000269" key="8">
    <source>
    </source>
</evidence>
<evidence type="ECO:0000269" key="9">
    <source>
    </source>
</evidence>
<evidence type="ECO:0000269" key="10">
    <source>
    </source>
</evidence>
<evidence type="ECO:0000303" key="11">
    <source>
    </source>
</evidence>
<evidence type="ECO:0000303" key="12">
    <source>
    </source>
</evidence>
<evidence type="ECO:0000305" key="13"/>
<evidence type="ECO:0000312" key="14">
    <source>
        <dbReference type="EMBL" id="BAC84063.1"/>
    </source>
</evidence>
<evidence type="ECO:0000312" key="15">
    <source>
        <dbReference type="EMBL" id="BAT03377.1"/>
    </source>
</evidence>
<evidence type="ECO:0000312" key="16">
    <source>
        <dbReference type="EMBL" id="EEE67880.1"/>
    </source>
</evidence>
<reference key="1">
    <citation type="journal article" date="2005" name="Biotechnol. Lett.">
        <title>Purification and characterization of two ascorbate peroxidases of rice (Oryza sativa L.) expressed in Escherichia coli.</title>
        <authorList>
            <person name="Lu Z."/>
            <person name="Takano T."/>
            <person name="Liu S."/>
        </authorList>
    </citation>
    <scope>NUCLEOTIDE SEQUENCE [MRNA]</scope>
    <scope>CATALYTIC ACTIVITY</scope>
    <scope>ACTIVITY REGULATION</scope>
    <scope>FUNCTION</scope>
    <scope>BIOPHYSICOCHEMICAL PROPERTIES</scope>
    <source>
        <strain>cv. Nipponbare</strain>
    </source>
</reference>
<reference key="2">
    <citation type="submission" date="2000-11" db="EMBL/GenBank/DDBJ databases">
        <title>The expression of two cytosolic ascorbate peroxidase genes in rice.</title>
        <authorList>
            <person name="Morita S."/>
            <person name="Kaminaka H."/>
            <person name="Masumura T."/>
            <person name="Tanaka K."/>
        </authorList>
    </citation>
    <scope>NUCLEOTIDE SEQUENCE [MRNA]</scope>
    <source>
        <strain>cv. Nipponbare</strain>
    </source>
</reference>
<reference key="3">
    <citation type="submission" date="2009-08" db="EMBL/GenBank/DDBJ databases">
        <title>Structural and expression analysis of germinating seed genes in Oryza sativa L.</title>
        <authorList>
            <person name="Yoon U.H."/>
            <person name="Kim Y.H."/>
        </authorList>
    </citation>
    <scope>NUCLEOTIDE SEQUENCE [MRNA]</scope>
    <source>
        <strain>cv. Ilpoombyeo</strain>
        <tissue>Seed</tissue>
    </source>
</reference>
<reference key="4">
    <citation type="journal article" date="2005" name="Nature">
        <title>The map-based sequence of the rice genome.</title>
        <authorList>
            <consortium name="International rice genome sequencing project (IRGSP)"/>
        </authorList>
    </citation>
    <scope>NUCLEOTIDE SEQUENCE [LARGE SCALE GENOMIC DNA]</scope>
    <source>
        <strain>cv. Nipponbare</strain>
    </source>
</reference>
<reference key="5">
    <citation type="journal article" date="2013" name="Rice">
        <title>Improvement of the Oryza sativa Nipponbare reference genome using next generation sequence and optical map data.</title>
        <authorList>
            <person name="Kawahara Y."/>
            <person name="de la Bastide M."/>
            <person name="Hamilton J.P."/>
            <person name="Kanamori H."/>
            <person name="McCombie W.R."/>
            <person name="Ouyang S."/>
            <person name="Schwartz D.C."/>
            <person name="Tanaka T."/>
            <person name="Wu J."/>
            <person name="Zhou S."/>
            <person name="Childs K.L."/>
            <person name="Davidson R.M."/>
            <person name="Lin H."/>
            <person name="Quesada-Ocampo L."/>
            <person name="Vaillancourt B."/>
            <person name="Sakai H."/>
            <person name="Lee S.S."/>
            <person name="Kim J."/>
            <person name="Numa H."/>
            <person name="Itoh T."/>
            <person name="Buell C.R."/>
            <person name="Matsumoto T."/>
        </authorList>
    </citation>
    <scope>GENOME REANNOTATION</scope>
    <source>
        <strain>cv. Nipponbare</strain>
    </source>
</reference>
<reference key="6">
    <citation type="journal article" date="2004" name="Nucleic Acids Res.">
        <title>Rice proteome database based on two-dimensional polyacrylamide gel electrophoresis: its status in 2003.</title>
        <authorList>
            <person name="Komatsu S."/>
            <person name="Kojima K."/>
            <person name="Suzuki K."/>
            <person name="Ozaki K."/>
            <person name="Higo K."/>
        </authorList>
    </citation>
    <scope>PROTEIN SEQUENCE OF 26-35</scope>
    <source>
        <strain>cv. Nipponbare</strain>
        <tissue>Anther</tissue>
        <tissue>Panicle</tissue>
        <tissue>Stem</tissue>
    </source>
</reference>
<reference key="7">
    <citation type="submission" date="1993-11" db="EMBL/GenBank/DDBJ databases">
        <authorList>
            <person name="Uchimiya H."/>
        </authorList>
    </citation>
    <scope>NUCLEOTIDE SEQUENCE [MRNA] OF 202-251</scope>
    <source>
        <tissue>Callus</tissue>
    </source>
</reference>
<reference key="8">
    <citation type="journal article" date="2003" name="Gene">
        <title>Importance of ascorbate peroxidases OsAPX1 and OsAPX2 in the rice pathogen response pathways and growth and reproduction revealed by their transcriptional profiling.</title>
        <authorList>
            <person name="Agrawal G.K."/>
            <person name="Jwa N.-S."/>
            <person name="Iwahashi H."/>
            <person name="Rakwal R."/>
        </authorList>
    </citation>
    <scope>TISSUE SPECIFICITY</scope>
    <scope>INDUCTION</scope>
</reference>
<reference key="9">
    <citation type="journal article" date="2004" name="J. Mol. Evol.">
        <title>Analysis of the molecular evolutionary history of the ascorbate peroxidase gene family: inferences from the rice genome.</title>
        <authorList>
            <person name="Teixeira F.K."/>
            <person name="Menezes-Benavente L."/>
            <person name="Margis R."/>
            <person name="Margis-Pinheiro M."/>
        </authorList>
    </citation>
    <scope>NOMENCLATURE</scope>
</reference>
<reference key="10">
    <citation type="journal article" date="2006" name="Planta">
        <title>Rice ascorbate peroxidase gene family encodes functionally diverse isoforms localized in different subcellular compartments.</title>
        <authorList>
            <person name="Teixeira F.K."/>
            <person name="Menezes-Benavente L."/>
            <person name="Galvao V.C."/>
            <person name="Margis R."/>
            <person name="Margis-Pinheiro M."/>
        </authorList>
    </citation>
    <scope>TISSUE SPECIFICITY</scope>
    <scope>INDUCTION BY SALT STRESS</scope>
</reference>
<reference key="11">
    <citation type="journal article" date="2012" name="J. Plant Physiol.">
        <title>Involvement of hydrogen peroxide in heat shock- and cadmium-induced expression of ascorbate peroxidase and glutathione reductase in leaves of rice seedlings.</title>
        <authorList>
            <person name="Chou T.S."/>
            <person name="Chao Y.Y."/>
            <person name="Kao C.H."/>
        </authorList>
    </citation>
    <scope>INDUCTION BY HEAT SHOCK</scope>
</reference>
<reference key="12">
    <citation type="journal article" date="2013" name="PLoS ONE">
        <title>Gene knockout study reveals that cytosolic ascorbate peroxidase 2(OsAPX2) plays a critical role in growth and reproduction in rice under drought, salt and cold stresses.</title>
        <authorList>
            <person name="Zhang Z."/>
            <person name="Zhang Q."/>
            <person name="Wu J."/>
            <person name="Zheng X."/>
            <person name="Zheng S."/>
            <person name="Sun X."/>
            <person name="Qiu Q."/>
            <person name="Lu T."/>
        </authorList>
    </citation>
    <scope>FUNCTION</scope>
    <scope>TISSUE SPECIFICITY</scope>
    <scope>INDUCTION</scope>
    <scope>DISRUPTION PHENOTYPE</scope>
</reference>
<reference key="13">
    <citation type="journal article" date="2015" name="J. Plant Physiol.">
        <title>Transcriptional profile of genes involved in ascorbate glutathione cycle in senescing leaves for an early senescence leaf (esl) rice mutant.</title>
        <authorList>
            <person name="Li Z."/>
            <person name="Su D."/>
            <person name="Lei B."/>
            <person name="Wang F."/>
            <person name="Geng W."/>
            <person name="Pan G."/>
            <person name="Cheng F."/>
        </authorList>
    </citation>
    <scope>INDUCTION BY HYDROGEN PEROXIDE</scope>
</reference>
<proteinExistence type="evidence at protein level"/>
<dbReference type="EC" id="1.11.1.11" evidence="6"/>
<dbReference type="EMBL" id="AB053297">
    <property type="protein sequence ID" value="BAB20889.1"/>
    <property type="molecule type" value="mRNA"/>
</dbReference>
<dbReference type="EMBL" id="AB050724">
    <property type="protein sequence ID" value="BAB17666.1"/>
    <property type="molecule type" value="mRNA"/>
</dbReference>
<dbReference type="EMBL" id="GQ848056">
    <property type="protein sequence ID" value="ADM86869.1"/>
    <property type="molecule type" value="mRNA"/>
</dbReference>
<dbReference type="EMBL" id="AP005199">
    <property type="protein sequence ID" value="BAC84063.1"/>
    <property type="molecule type" value="Genomic_DNA"/>
</dbReference>
<dbReference type="EMBL" id="AP008213">
    <property type="protein sequence ID" value="BAF22655.1"/>
    <property type="molecule type" value="Genomic_DNA"/>
</dbReference>
<dbReference type="EMBL" id="AP014963">
    <property type="protein sequence ID" value="BAT03377.1"/>
    <property type="molecule type" value="Genomic_DNA"/>
</dbReference>
<dbReference type="EMBL" id="CM000144">
    <property type="protein sequence ID" value="EEE67880.1"/>
    <property type="molecule type" value="Genomic_DNA"/>
</dbReference>
<dbReference type="EMBL" id="AK061715">
    <property type="protein sequence ID" value="BAG88062.1"/>
    <property type="molecule type" value="mRNA"/>
</dbReference>
<dbReference type="EMBL" id="D25238">
    <property type="protein sequence ID" value="BAA04962.1"/>
    <property type="molecule type" value="mRNA"/>
</dbReference>
<dbReference type="PIR" id="T04114">
    <property type="entry name" value="T04114"/>
</dbReference>
<dbReference type="RefSeq" id="XP_015646556.1">
    <property type="nucleotide sequence ID" value="XM_015791070.1"/>
</dbReference>
<dbReference type="SMR" id="Q9FE01"/>
<dbReference type="FunCoup" id="Q9FE01">
    <property type="interactions" value="982"/>
</dbReference>
<dbReference type="STRING" id="39947.Q9FE01"/>
<dbReference type="PeroxiBase" id="1866">
    <property type="entry name" value="OsAPx02"/>
</dbReference>
<dbReference type="PaxDb" id="39947-Q9FE01"/>
<dbReference type="EnsemblPlants" id="Os07t0694700-01">
    <property type="protein sequence ID" value="Os07t0694700-01"/>
    <property type="gene ID" value="Os07g0694700"/>
</dbReference>
<dbReference type="Gramene" id="Os07t0694700-01">
    <property type="protein sequence ID" value="Os07t0694700-01"/>
    <property type="gene ID" value="Os07g0694700"/>
</dbReference>
<dbReference type="KEGG" id="dosa:Os07g0694700"/>
<dbReference type="eggNOG" id="ENOG502QR1E">
    <property type="taxonomic scope" value="Eukaryota"/>
</dbReference>
<dbReference type="HOGENOM" id="CLU_036959_3_0_1"/>
<dbReference type="InParanoid" id="Q9FE01"/>
<dbReference type="OMA" id="CTHVRNE"/>
<dbReference type="OrthoDB" id="2859658at2759"/>
<dbReference type="BRENDA" id="1.11.1.11">
    <property type="organism ID" value="4460"/>
</dbReference>
<dbReference type="SABIO-RK" id="Q9FE01"/>
<dbReference type="Proteomes" id="UP000000763">
    <property type="component" value="Chromosome 7"/>
</dbReference>
<dbReference type="Proteomes" id="UP000007752">
    <property type="component" value="Chromosome 7"/>
</dbReference>
<dbReference type="Proteomes" id="UP000059680">
    <property type="component" value="Chromosome 7"/>
</dbReference>
<dbReference type="ExpressionAtlas" id="Q9FE01">
    <property type="expression patterns" value="baseline and differential"/>
</dbReference>
<dbReference type="GO" id="GO:0009507">
    <property type="term" value="C:chloroplast"/>
    <property type="evidence" value="ECO:0000318"/>
    <property type="project" value="GO_Central"/>
</dbReference>
<dbReference type="GO" id="GO:0020037">
    <property type="term" value="F:heme binding"/>
    <property type="evidence" value="ECO:0007669"/>
    <property type="project" value="InterPro"/>
</dbReference>
<dbReference type="GO" id="GO:0016688">
    <property type="term" value="F:L-ascorbate peroxidase activity"/>
    <property type="evidence" value="ECO:0007669"/>
    <property type="project" value="UniProtKB-EC"/>
</dbReference>
<dbReference type="GO" id="GO:0046872">
    <property type="term" value="F:metal ion binding"/>
    <property type="evidence" value="ECO:0007669"/>
    <property type="project" value="UniProtKB-KW"/>
</dbReference>
<dbReference type="GO" id="GO:0004601">
    <property type="term" value="F:peroxidase activity"/>
    <property type="evidence" value="ECO:0000318"/>
    <property type="project" value="GO_Central"/>
</dbReference>
<dbReference type="GO" id="GO:0034599">
    <property type="term" value="P:cellular response to oxidative stress"/>
    <property type="evidence" value="ECO:0000318"/>
    <property type="project" value="GO_Central"/>
</dbReference>
<dbReference type="GO" id="GO:0042744">
    <property type="term" value="P:hydrogen peroxide catabolic process"/>
    <property type="evidence" value="ECO:0000318"/>
    <property type="project" value="GO_Central"/>
</dbReference>
<dbReference type="GO" id="GO:0000302">
    <property type="term" value="P:response to reactive oxygen species"/>
    <property type="evidence" value="ECO:0000318"/>
    <property type="project" value="GO_Central"/>
</dbReference>
<dbReference type="CDD" id="cd00691">
    <property type="entry name" value="ascorbate_peroxidase"/>
    <property type="match status" value="1"/>
</dbReference>
<dbReference type="FunFam" id="1.10.520.10:FF:000003">
    <property type="entry name" value="Cytosolic ascorbate peroxidase"/>
    <property type="match status" value="1"/>
</dbReference>
<dbReference type="FunFam" id="1.10.420.10:FF:000003">
    <property type="entry name" value="L-ascorbate peroxidase, cytosolic"/>
    <property type="match status" value="1"/>
</dbReference>
<dbReference type="Gene3D" id="1.10.520.10">
    <property type="match status" value="1"/>
</dbReference>
<dbReference type="Gene3D" id="1.10.420.10">
    <property type="entry name" value="Peroxidase, domain 2"/>
    <property type="match status" value="1"/>
</dbReference>
<dbReference type="InterPro" id="IPR044831">
    <property type="entry name" value="Ccp1-like"/>
</dbReference>
<dbReference type="InterPro" id="IPR002016">
    <property type="entry name" value="Haem_peroxidase"/>
</dbReference>
<dbReference type="InterPro" id="IPR010255">
    <property type="entry name" value="Haem_peroxidase_sf"/>
</dbReference>
<dbReference type="InterPro" id="IPR002207">
    <property type="entry name" value="Peroxidase_I"/>
</dbReference>
<dbReference type="InterPro" id="IPR019794">
    <property type="entry name" value="Peroxidases_AS"/>
</dbReference>
<dbReference type="InterPro" id="IPR019793">
    <property type="entry name" value="Peroxidases_heam-ligand_BS"/>
</dbReference>
<dbReference type="PANTHER" id="PTHR31356:SF59">
    <property type="entry name" value="L-ASCORBATE PEROXIDASE 1, CYTOSOLIC"/>
    <property type="match status" value="1"/>
</dbReference>
<dbReference type="PANTHER" id="PTHR31356">
    <property type="entry name" value="THYLAKOID LUMENAL 29 KDA PROTEIN, CHLOROPLASTIC-RELATED"/>
    <property type="match status" value="1"/>
</dbReference>
<dbReference type="Pfam" id="PF00141">
    <property type="entry name" value="peroxidase"/>
    <property type="match status" value="1"/>
</dbReference>
<dbReference type="PRINTS" id="PR00459">
    <property type="entry name" value="ASPEROXIDASE"/>
</dbReference>
<dbReference type="PRINTS" id="PR00458">
    <property type="entry name" value="PEROXIDASE"/>
</dbReference>
<dbReference type="SUPFAM" id="SSF48113">
    <property type="entry name" value="Heme-dependent peroxidases"/>
    <property type="match status" value="1"/>
</dbReference>
<dbReference type="PROSITE" id="PS00435">
    <property type="entry name" value="PEROXIDASE_1"/>
    <property type="match status" value="1"/>
</dbReference>
<dbReference type="PROSITE" id="PS00436">
    <property type="entry name" value="PEROXIDASE_2"/>
    <property type="match status" value="1"/>
</dbReference>
<dbReference type="PROSITE" id="PS50873">
    <property type="entry name" value="PEROXIDASE_4"/>
    <property type="match status" value="1"/>
</dbReference>
<protein>
    <recommendedName>
        <fullName evidence="13">L-ascorbate peroxidase 2, cytosolic</fullName>
        <ecNumber evidence="6">1.11.1.11</ecNumber>
    </recommendedName>
    <alternativeName>
        <fullName evidence="12">APXb</fullName>
    </alternativeName>
    <alternativeName>
        <fullName evidence="11">OsAPx2</fullName>
    </alternativeName>
</protein>
<comment type="function">
    <text evidence="6 9">Plays a key role in hydrogen peroxide removal (PubMed:15685422). Plays an important role in plant growth and development by protecting the seedlings from abiotic stresses through scavenging reactive oxygen species. Required for pollen viability (PubMed:23468992).</text>
</comment>
<comment type="catalytic activity">
    <reaction evidence="6">
        <text>L-ascorbate + H2O2 = L-dehydroascorbate + 2 H2O</text>
        <dbReference type="Rhea" id="RHEA:22996"/>
        <dbReference type="ChEBI" id="CHEBI:15377"/>
        <dbReference type="ChEBI" id="CHEBI:16240"/>
        <dbReference type="ChEBI" id="CHEBI:38290"/>
        <dbReference type="ChEBI" id="CHEBI:58539"/>
        <dbReference type="EC" id="1.11.1.11"/>
    </reaction>
</comment>
<comment type="cofactor">
    <cofactor evidence="1">
        <name>heme b</name>
        <dbReference type="ChEBI" id="CHEBI:60344"/>
    </cofactor>
    <text evidence="1">Binds 1 heme b (iron(II)-protoporphyrin IX) group.</text>
</comment>
<comment type="activity regulation">
    <text evidence="6">Inhibited by p-chloromercuriphenylsulfonic acid (CMPSA).</text>
</comment>
<comment type="biophysicochemical properties">
    <kinetics>
        <KM evidence="6">1 mM for ascorbate</KM>
        <KM evidence="6">0.7 mM for H(2)O(2)</KM>
        <Vmax evidence="6">20.0 mM/min/mg enzyme with ascorbate as substrate</Vmax>
        <Vmax evidence="6">3.0 mM/min/mg enzyme with H(2)O(2) as substrate</Vmax>
    </kinetics>
    <phDependence>
        <text evidence="6">Optimum pH is 6-7.</text>
    </phDependence>
</comment>
<comment type="subcellular location">
    <subcellularLocation>
        <location evidence="13">Cytoplasm</location>
    </subcellularLocation>
</comment>
<comment type="tissue specificity">
    <text evidence="5 7 9">Expressed in aerial vegetative parts and reproductive organs (PubMed:14644501). Expressed in roots, leaves, stems and flowers (PubMed:16397796). Expressed in young leaves, internodes, blade ears, stems and anthers (PubMed:23468992).</text>
</comment>
<comment type="induction">
    <text evidence="5 7 8 9 10">By stress and hormones. By infection with rice blast fungus (M.grisea). Circadian-regulation. Expression is higher during the light phase than during the dark phase. Induced by salt stress (PubMed:16397796, PubMed:23468992). Induced by heat shock (PubMed:22196946). Induced by hydrogen peroxide in leaves (PubMed:25546583). Induced by drought and cold stresses (PubMed:23468992).</text>
</comment>
<comment type="disruption phenotype">
    <text evidence="9">Semi-dwarf plants, yellow-green leaves, leaf lesion mimic phenotype, abnormal anther morphology, defects in pollen viability and seed sterility.</text>
</comment>
<comment type="miscellaneous">
    <text evidence="1 9">Binds one cation per subunit; probably K(+), but might also be Ca(2+) (By similarity). Plants over-expressing APX2 have increased ascorbate peroxidase activity and exhibit enhanced tolerance to salt, drought and cold stresses (PubMed:23468992).</text>
</comment>
<comment type="similarity">
    <text evidence="13">Belongs to the peroxidase family. Ascorbate peroxidase subfamily.</text>
</comment>